<keyword id="KW-0472">Membrane</keyword>
<keyword id="KW-1185">Reference proteome</keyword>
<keyword id="KW-0812">Transmembrane</keyword>
<keyword id="KW-1133">Transmembrane helix</keyword>
<accession>O94596</accession>
<comment type="subcellular location">
    <subcellularLocation>
        <location evidence="2">Membrane</location>
        <topology evidence="2">Multi-pass membrane protein</topology>
    </subcellularLocation>
</comment>
<name>YC86_SCHPO</name>
<proteinExistence type="predicted"/>
<reference key="1">
    <citation type="journal article" date="2002" name="Nature">
        <title>The genome sequence of Schizosaccharomyces pombe.</title>
        <authorList>
            <person name="Wood V."/>
            <person name="Gwilliam R."/>
            <person name="Rajandream M.A."/>
            <person name="Lyne M.H."/>
            <person name="Lyne R."/>
            <person name="Stewart A."/>
            <person name="Sgouros J.G."/>
            <person name="Peat N."/>
            <person name="Hayles J."/>
            <person name="Baker S.G."/>
            <person name="Basham D."/>
            <person name="Bowman S."/>
            <person name="Brooks K."/>
            <person name="Brown D."/>
            <person name="Brown S."/>
            <person name="Chillingworth T."/>
            <person name="Churcher C.M."/>
            <person name="Collins M."/>
            <person name="Connor R."/>
            <person name="Cronin A."/>
            <person name="Davis P."/>
            <person name="Feltwell T."/>
            <person name="Fraser A."/>
            <person name="Gentles S."/>
            <person name="Goble A."/>
            <person name="Hamlin N."/>
            <person name="Harris D.E."/>
            <person name="Hidalgo J."/>
            <person name="Hodgson G."/>
            <person name="Holroyd S."/>
            <person name="Hornsby T."/>
            <person name="Howarth S."/>
            <person name="Huckle E.J."/>
            <person name="Hunt S."/>
            <person name="Jagels K."/>
            <person name="James K.D."/>
            <person name="Jones L."/>
            <person name="Jones M."/>
            <person name="Leather S."/>
            <person name="McDonald S."/>
            <person name="McLean J."/>
            <person name="Mooney P."/>
            <person name="Moule S."/>
            <person name="Mungall K.L."/>
            <person name="Murphy L.D."/>
            <person name="Niblett D."/>
            <person name="Odell C."/>
            <person name="Oliver K."/>
            <person name="O'Neil S."/>
            <person name="Pearson D."/>
            <person name="Quail M.A."/>
            <person name="Rabbinowitsch E."/>
            <person name="Rutherford K.M."/>
            <person name="Rutter S."/>
            <person name="Saunders D."/>
            <person name="Seeger K."/>
            <person name="Sharp S."/>
            <person name="Skelton J."/>
            <person name="Simmonds M.N."/>
            <person name="Squares R."/>
            <person name="Squares S."/>
            <person name="Stevens K."/>
            <person name="Taylor K."/>
            <person name="Taylor R.G."/>
            <person name="Tivey A."/>
            <person name="Walsh S.V."/>
            <person name="Warren T."/>
            <person name="Whitehead S."/>
            <person name="Woodward J.R."/>
            <person name="Volckaert G."/>
            <person name="Aert R."/>
            <person name="Robben J."/>
            <person name="Grymonprez B."/>
            <person name="Weltjens I."/>
            <person name="Vanstreels E."/>
            <person name="Rieger M."/>
            <person name="Schaefer M."/>
            <person name="Mueller-Auer S."/>
            <person name="Gabel C."/>
            <person name="Fuchs M."/>
            <person name="Duesterhoeft A."/>
            <person name="Fritzc C."/>
            <person name="Holzer E."/>
            <person name="Moestl D."/>
            <person name="Hilbert H."/>
            <person name="Borzym K."/>
            <person name="Langer I."/>
            <person name="Beck A."/>
            <person name="Lehrach H."/>
            <person name="Reinhardt R."/>
            <person name="Pohl T.M."/>
            <person name="Eger P."/>
            <person name="Zimmermann W."/>
            <person name="Wedler H."/>
            <person name="Wambutt R."/>
            <person name="Purnelle B."/>
            <person name="Goffeau A."/>
            <person name="Cadieu E."/>
            <person name="Dreano S."/>
            <person name="Gloux S."/>
            <person name="Lelaure V."/>
            <person name="Mottier S."/>
            <person name="Galibert F."/>
            <person name="Aves S.J."/>
            <person name="Xiang Z."/>
            <person name="Hunt C."/>
            <person name="Moore K."/>
            <person name="Hurst S.M."/>
            <person name="Lucas M."/>
            <person name="Rochet M."/>
            <person name="Gaillardin C."/>
            <person name="Tallada V.A."/>
            <person name="Garzon A."/>
            <person name="Thode G."/>
            <person name="Daga R.R."/>
            <person name="Cruzado L."/>
            <person name="Jimenez J."/>
            <person name="Sanchez M."/>
            <person name="del Rey F."/>
            <person name="Benito J."/>
            <person name="Dominguez A."/>
            <person name="Revuelta J.L."/>
            <person name="Moreno S."/>
            <person name="Armstrong J."/>
            <person name="Forsburg S.L."/>
            <person name="Cerutti L."/>
            <person name="Lowe T."/>
            <person name="McCombie W.R."/>
            <person name="Paulsen I."/>
            <person name="Potashkin J."/>
            <person name="Shpakovski G.V."/>
            <person name="Ussery D."/>
            <person name="Barrell B.G."/>
            <person name="Nurse P."/>
        </authorList>
    </citation>
    <scope>NUCLEOTIDE SEQUENCE [LARGE SCALE GENOMIC DNA]</scope>
    <source>
        <strain>972 / ATCC 24843</strain>
    </source>
</reference>
<sequence length="122" mass="14277">MSPKESIELQEFQSLLQDEAYEELINKKTYEAIKYRSNDGILPIIITLFIFSFVISRMIIFFISLFNKNTYCELPAVADAIINSIALVCIIVILYFSSRKLNVEIRRGEVEDYRANLERNQR</sequence>
<organism>
    <name type="scientific">Schizosaccharomyces pombe (strain 972 / ATCC 24843)</name>
    <name type="common">Fission yeast</name>
    <dbReference type="NCBI Taxonomy" id="284812"/>
    <lineage>
        <taxon>Eukaryota</taxon>
        <taxon>Fungi</taxon>
        <taxon>Dikarya</taxon>
        <taxon>Ascomycota</taxon>
        <taxon>Taphrinomycotina</taxon>
        <taxon>Schizosaccharomycetes</taxon>
        <taxon>Schizosaccharomycetales</taxon>
        <taxon>Schizosaccharomycetaceae</taxon>
        <taxon>Schizosaccharomyces</taxon>
    </lineage>
</organism>
<protein>
    <recommendedName>
        <fullName>Putative uncharacterized membrane protein C622.06c</fullName>
    </recommendedName>
</protein>
<gene>
    <name type="ORF">SPCC622.06c</name>
</gene>
<dbReference type="EMBL" id="CU329672">
    <property type="protein sequence ID" value="CAA21862.1"/>
    <property type="molecule type" value="Genomic_DNA"/>
</dbReference>
<dbReference type="PIR" id="T41486">
    <property type="entry name" value="T41486"/>
</dbReference>
<dbReference type="RefSeq" id="NP_588178.1">
    <property type="nucleotide sequence ID" value="NM_001023168.2"/>
</dbReference>
<dbReference type="BioGRID" id="275850">
    <property type="interactions" value="8"/>
</dbReference>
<dbReference type="iPTMnet" id="O94596"/>
<dbReference type="PaxDb" id="4896-SPCC622.06c.1"/>
<dbReference type="EnsemblFungi" id="SPCC622.06c.1">
    <property type="protein sequence ID" value="SPCC622.06c.1:pep"/>
    <property type="gene ID" value="SPCC622.06c"/>
</dbReference>
<dbReference type="KEGG" id="spo:2539282"/>
<dbReference type="PomBase" id="SPCC622.06c"/>
<dbReference type="VEuPathDB" id="FungiDB:SPCC622.06c"/>
<dbReference type="HOGENOM" id="CLU_2028089_0_0_1"/>
<dbReference type="InParanoid" id="O94596"/>
<dbReference type="PRO" id="PR:O94596"/>
<dbReference type="Proteomes" id="UP000002485">
    <property type="component" value="Chromosome III"/>
</dbReference>
<dbReference type="GO" id="GO:0016020">
    <property type="term" value="C:membrane"/>
    <property type="evidence" value="ECO:0007669"/>
    <property type="project" value="UniProtKB-SubCell"/>
</dbReference>
<feature type="chain" id="PRO_0000303962" description="Putative uncharacterized membrane protein C622.06c">
    <location>
        <begin position="1"/>
        <end position="122"/>
    </location>
</feature>
<feature type="transmembrane region" description="Helical" evidence="1">
    <location>
        <begin position="43"/>
        <end position="63"/>
    </location>
</feature>
<feature type="transmembrane region" description="Helical" evidence="1">
    <location>
        <begin position="76"/>
        <end position="96"/>
    </location>
</feature>
<evidence type="ECO:0000255" key="1"/>
<evidence type="ECO:0000305" key="2"/>